<evidence type="ECO:0000250" key="1">
    <source>
        <dbReference type="UniProtKB" id="P87297"/>
    </source>
</evidence>
<evidence type="ECO:0000250" key="2">
    <source>
        <dbReference type="UniProtKB" id="Q12248"/>
    </source>
</evidence>
<evidence type="ECO:0000256" key="3">
    <source>
        <dbReference type="SAM" id="MobiDB-lite"/>
    </source>
</evidence>
<evidence type="ECO:0000269" key="4">
    <source>
    </source>
</evidence>
<evidence type="ECO:0000305" key="5"/>
<evidence type="ECO:0000312" key="6">
    <source>
        <dbReference type="CGD" id="CAL0000195552"/>
    </source>
</evidence>
<evidence type="ECO:0000312" key="7">
    <source>
        <dbReference type="EMBL" id="AOW26973.1"/>
    </source>
</evidence>
<evidence type="ECO:0000312" key="8">
    <source>
        <dbReference type="Proteomes" id="UP000000559"/>
    </source>
</evidence>
<name>DAD1_CANAL</name>
<gene>
    <name evidence="6" type="primary">DAD1</name>
    <name evidence="7" type="ordered locus">CAALFM_C113710CA</name>
    <name evidence="6" type="ORF">orf19.5008.1</name>
</gene>
<comment type="function">
    <text evidence="2">Component of the DASH complex that connects microtubules with kinetochores and couples microtubule depolymerisation to chromosome movement; it is involved in retrieving kinetochores to the spindle poles before their re-orientation on the spindle in early mitosis and allows microtubule depolymerization to pull chromosomes apart and resist detachment during anaphase. Kinetochores, consisting of a centromere-associated inner segment and a microtubule-contacting outer segment, play a crucial role in chromosome segregation by mediating the physical connection between centromeric DNA and microtubules. Kinetochores also serve as an input point for the spindle assembly checkpoint, which delays anaphase until all chromosomes have bioriented on the mitotic spindle.</text>
</comment>
<comment type="subunit">
    <text evidence="1 2">Component of the DASH complex consisting of ASK1, DAD1, DAD2, DAD3, DAD4, DAM1, DUO1, HSK3, SPC19 and SPC34, with a stoichiometry of one copy of each subunit per complex. Multiple DASH complexes oligomerize to form a ring that encircles spindle microtubules and organizes the rod-like NDC80 complexes of the outer kinetochore. DASH complex oligomerization strengthens microtubule attachments (By similarity). On cytoplasmic microtubules, DASH complexes appear to form patches instead of rings (By similarity).</text>
</comment>
<comment type="subcellular location">
    <subcellularLocation>
        <location evidence="4">Chromosome</location>
        <location evidence="4">Centromere</location>
        <location evidence="4">Kinetochore</location>
    </subcellularLocation>
    <subcellularLocation>
        <location evidence="2">Cytoplasm</location>
        <location evidence="2">Cytoskeleton</location>
        <location evidence="2">Spindle</location>
    </subcellularLocation>
    <subcellularLocation>
        <location evidence="4">Nucleus</location>
    </subcellularLocation>
</comment>
<comment type="disruption phenotype">
    <text evidence="4">Inviable.</text>
</comment>
<comment type="similarity">
    <text evidence="5">Belongs to the DASH complex DAD1 family.</text>
</comment>
<accession>A0A1D8PFP9</accession>
<protein>
    <recommendedName>
        <fullName evidence="2">DASH complex subunit DAD1</fullName>
    </recommendedName>
    <alternativeName>
        <fullName evidence="2">Outer kinetochore protein DAD1</fullName>
    </alternativeName>
</protein>
<dbReference type="EMBL" id="CP017623">
    <property type="protein sequence ID" value="AOW26973.1"/>
    <property type="molecule type" value="Genomic_DNA"/>
</dbReference>
<dbReference type="RefSeq" id="XP_019330728.1">
    <property type="nucleotide sequence ID" value="XM_019475183.1"/>
</dbReference>
<dbReference type="SMR" id="A0A1D8PFP9"/>
<dbReference type="FunCoup" id="A0A1D8PFP9">
    <property type="interactions" value="23"/>
</dbReference>
<dbReference type="STRING" id="237561.A0A1D8PFP9"/>
<dbReference type="EnsemblFungi" id="C1_13710C_A-T">
    <property type="protein sequence ID" value="C1_13710C_A-T-p1"/>
    <property type="gene ID" value="C1_13710C_A"/>
</dbReference>
<dbReference type="GeneID" id="30515077"/>
<dbReference type="KEGG" id="cal:CAALFM_C113710CA"/>
<dbReference type="CGD" id="CAL0000195552">
    <property type="gene designation" value="DAD1"/>
</dbReference>
<dbReference type="VEuPathDB" id="FungiDB:C1_13710C_A"/>
<dbReference type="eggNOG" id="ENOG502SBWQ">
    <property type="taxonomic scope" value="Eukaryota"/>
</dbReference>
<dbReference type="InParanoid" id="A0A1D8PFP9"/>
<dbReference type="OMA" id="RLWSTFY"/>
<dbReference type="OrthoDB" id="5566853at2759"/>
<dbReference type="Proteomes" id="UP000000559">
    <property type="component" value="Chromosome 1"/>
</dbReference>
<dbReference type="GO" id="GO:0005737">
    <property type="term" value="C:cytoplasm"/>
    <property type="evidence" value="ECO:0007669"/>
    <property type="project" value="UniProtKB-KW"/>
</dbReference>
<dbReference type="GO" id="GO:0042729">
    <property type="term" value="C:DASH complex"/>
    <property type="evidence" value="ECO:0000314"/>
    <property type="project" value="CGD"/>
</dbReference>
<dbReference type="GO" id="GO:0000776">
    <property type="term" value="C:kinetochore"/>
    <property type="evidence" value="ECO:0000314"/>
    <property type="project" value="UniProtKB"/>
</dbReference>
<dbReference type="GO" id="GO:0072686">
    <property type="term" value="C:mitotic spindle"/>
    <property type="evidence" value="ECO:0007669"/>
    <property type="project" value="InterPro"/>
</dbReference>
<dbReference type="GO" id="GO:0044732">
    <property type="term" value="C:mitotic spindle pole body"/>
    <property type="evidence" value="ECO:0000318"/>
    <property type="project" value="GO_Central"/>
</dbReference>
<dbReference type="GO" id="GO:0005634">
    <property type="term" value="C:nucleus"/>
    <property type="evidence" value="ECO:0000314"/>
    <property type="project" value="UniProtKB"/>
</dbReference>
<dbReference type="GO" id="GO:0005876">
    <property type="term" value="C:spindle microtubule"/>
    <property type="evidence" value="ECO:0000318"/>
    <property type="project" value="GO_Central"/>
</dbReference>
<dbReference type="GO" id="GO:0051301">
    <property type="term" value="P:cell division"/>
    <property type="evidence" value="ECO:0007669"/>
    <property type="project" value="UniProtKB-KW"/>
</dbReference>
<dbReference type="GO" id="GO:0030447">
    <property type="term" value="P:filamentous growth"/>
    <property type="evidence" value="ECO:0000315"/>
    <property type="project" value="CGD"/>
</dbReference>
<dbReference type="GO" id="GO:0007052">
    <property type="term" value="P:mitotic spindle organization"/>
    <property type="evidence" value="ECO:0000247"/>
    <property type="project" value="CGD"/>
</dbReference>
<dbReference type="InterPro" id="IPR013958">
    <property type="entry name" value="DASH_Dad1"/>
</dbReference>
<dbReference type="PANTHER" id="PTHR28025">
    <property type="entry name" value="DASH COMPLEX SUBUNIT DAD1"/>
    <property type="match status" value="1"/>
</dbReference>
<dbReference type="PANTHER" id="PTHR28025:SF1">
    <property type="entry name" value="DASH COMPLEX SUBUNIT DAD1"/>
    <property type="match status" value="1"/>
</dbReference>
<dbReference type="Pfam" id="PF08649">
    <property type="entry name" value="DASH_Dad1"/>
    <property type="match status" value="1"/>
</dbReference>
<sequence>MSNSSSNPSKNEYFIKQRDLLIQEISNNLSIVQTNLETLNRSLHESKQIGKEFDDVARLWSTFYDGMNGMNHQTRENTRDENNKISSSDTEDENNNNKI</sequence>
<proteinExistence type="inferred from homology"/>
<keyword id="KW-0131">Cell cycle</keyword>
<keyword id="KW-0132">Cell division</keyword>
<keyword id="KW-0137">Centromere</keyword>
<keyword id="KW-0158">Chromosome</keyword>
<keyword id="KW-0963">Cytoplasm</keyword>
<keyword id="KW-0206">Cytoskeleton</keyword>
<keyword id="KW-0995">Kinetochore</keyword>
<keyword id="KW-0493">Microtubule</keyword>
<keyword id="KW-0498">Mitosis</keyword>
<keyword id="KW-0539">Nucleus</keyword>
<keyword id="KW-1185">Reference proteome</keyword>
<reference evidence="8" key="1">
    <citation type="journal article" date="2004" name="Proc. Natl. Acad. Sci. U.S.A.">
        <title>The diploid genome sequence of Candida albicans.</title>
        <authorList>
            <person name="Jones T."/>
            <person name="Federspiel N.A."/>
            <person name="Chibana H."/>
            <person name="Dungan J."/>
            <person name="Kalman S."/>
            <person name="Magee B.B."/>
            <person name="Newport G."/>
            <person name="Thorstenson Y.R."/>
            <person name="Agabian N."/>
            <person name="Magee P.T."/>
            <person name="Davis R.W."/>
            <person name="Scherer S."/>
        </authorList>
    </citation>
    <scope>NUCLEOTIDE SEQUENCE [LARGE SCALE GENOMIC DNA]</scope>
    <source>
        <strain evidence="8">SC5314 / ATCC MYA-2876</strain>
    </source>
</reference>
<reference evidence="8" key="2">
    <citation type="journal article" date="2007" name="Genome Biol.">
        <title>Assembly of the Candida albicans genome into sixteen supercontigs aligned on the eight chromosomes.</title>
        <authorList>
            <person name="van het Hoog M."/>
            <person name="Rast T.J."/>
            <person name="Martchenko M."/>
            <person name="Grindle S."/>
            <person name="Dignard D."/>
            <person name="Hogues H."/>
            <person name="Cuomo C."/>
            <person name="Berriman M."/>
            <person name="Scherer S."/>
            <person name="Magee B.B."/>
            <person name="Whiteway M."/>
            <person name="Chibana H."/>
            <person name="Nantel A."/>
            <person name="Magee P.T."/>
        </authorList>
    </citation>
    <scope>GENOME REANNOTATION</scope>
    <source>
        <strain evidence="8">SC5314 / ATCC MYA-2876</strain>
    </source>
</reference>
<reference evidence="8" key="3">
    <citation type="journal article" date="2013" name="Genome Biol.">
        <title>Assembly of a phased diploid Candida albicans genome facilitates allele-specific measurements and provides a simple model for repeat and indel structure.</title>
        <authorList>
            <person name="Muzzey D."/>
            <person name="Schwartz K."/>
            <person name="Weissman J.S."/>
            <person name="Sherlock G."/>
        </authorList>
    </citation>
    <scope>NUCLEOTIDE SEQUENCE [LARGE SCALE GENOMIC DNA]</scope>
    <scope>GENOME REANNOTATION</scope>
    <source>
        <strain>SC5314 / ATCC MYA-2876</strain>
    </source>
</reference>
<reference evidence="5" key="4">
    <citation type="journal article" date="2011" name="Curr. Biol.">
        <title>The requirement for the Dam1 complex is dependent upon the number of kinetochore proteins and microtubules.</title>
        <authorList>
            <person name="Burrack L.S."/>
            <person name="Applen S.E."/>
            <person name="Berman J."/>
        </authorList>
    </citation>
    <scope>SUBCELLULAR LOCATION</scope>
    <scope>DISRUPTION PHENOTYPE</scope>
</reference>
<feature type="chain" id="PRO_0000459458" description="DASH complex subunit DAD1">
    <location>
        <begin position="1"/>
        <end position="99"/>
    </location>
</feature>
<feature type="region of interest" description="Disordered" evidence="3">
    <location>
        <begin position="69"/>
        <end position="99"/>
    </location>
</feature>
<feature type="compositionally biased region" description="Basic and acidic residues" evidence="3">
    <location>
        <begin position="73"/>
        <end position="83"/>
    </location>
</feature>
<feature type="compositionally biased region" description="Acidic residues" evidence="3">
    <location>
        <begin position="89"/>
        <end position="99"/>
    </location>
</feature>
<organism evidence="8">
    <name type="scientific">Candida albicans (strain SC5314 / ATCC MYA-2876)</name>
    <name type="common">Yeast</name>
    <dbReference type="NCBI Taxonomy" id="237561"/>
    <lineage>
        <taxon>Eukaryota</taxon>
        <taxon>Fungi</taxon>
        <taxon>Dikarya</taxon>
        <taxon>Ascomycota</taxon>
        <taxon>Saccharomycotina</taxon>
        <taxon>Pichiomycetes</taxon>
        <taxon>Debaryomycetaceae</taxon>
        <taxon>Candida/Lodderomyces clade</taxon>
        <taxon>Candida</taxon>
    </lineage>
</organism>